<feature type="chain" id="PRO_1000052739" description="Large ribosomal subunit protein uL5">
    <location>
        <begin position="1"/>
        <end position="179"/>
    </location>
</feature>
<comment type="function">
    <text evidence="1">This is one of the proteins that bind and probably mediate the attachment of the 5S RNA into the large ribosomal subunit, where it forms part of the central protuberance. In the 70S ribosome it contacts protein S13 of the 30S subunit (bridge B1b), connecting the 2 subunits; this bridge is implicated in subunit movement. Contacts the P site tRNA; the 5S rRNA and some of its associated proteins might help stabilize positioning of ribosome-bound tRNAs.</text>
</comment>
<comment type="subunit">
    <text evidence="1">Part of the 50S ribosomal subunit; part of the 5S rRNA/L5/L18/L25 subcomplex. Contacts the 5S rRNA and the P site tRNA. Forms a bridge to the 30S subunit in the 70S ribosome.</text>
</comment>
<comment type="similarity">
    <text evidence="1">Belongs to the universal ribosomal protein uL5 family.</text>
</comment>
<dbReference type="EMBL" id="CP000437">
    <property type="protein sequence ID" value="ABI82269.1"/>
    <property type="molecule type" value="Genomic_DNA"/>
</dbReference>
<dbReference type="RefSeq" id="WP_003014352.1">
    <property type="nucleotide sequence ID" value="NC_017463.1"/>
</dbReference>
<dbReference type="SMR" id="Q0BNR5"/>
<dbReference type="GeneID" id="75264249"/>
<dbReference type="KEGG" id="fth:FTH_0243"/>
<dbReference type="GO" id="GO:1990904">
    <property type="term" value="C:ribonucleoprotein complex"/>
    <property type="evidence" value="ECO:0007669"/>
    <property type="project" value="UniProtKB-KW"/>
</dbReference>
<dbReference type="GO" id="GO:0005840">
    <property type="term" value="C:ribosome"/>
    <property type="evidence" value="ECO:0007669"/>
    <property type="project" value="UniProtKB-KW"/>
</dbReference>
<dbReference type="GO" id="GO:0019843">
    <property type="term" value="F:rRNA binding"/>
    <property type="evidence" value="ECO:0007669"/>
    <property type="project" value="UniProtKB-UniRule"/>
</dbReference>
<dbReference type="GO" id="GO:0003735">
    <property type="term" value="F:structural constituent of ribosome"/>
    <property type="evidence" value="ECO:0007669"/>
    <property type="project" value="InterPro"/>
</dbReference>
<dbReference type="GO" id="GO:0000049">
    <property type="term" value="F:tRNA binding"/>
    <property type="evidence" value="ECO:0007669"/>
    <property type="project" value="UniProtKB-UniRule"/>
</dbReference>
<dbReference type="GO" id="GO:0006412">
    <property type="term" value="P:translation"/>
    <property type="evidence" value="ECO:0007669"/>
    <property type="project" value="UniProtKB-UniRule"/>
</dbReference>
<dbReference type="FunFam" id="3.30.1440.10:FF:000001">
    <property type="entry name" value="50S ribosomal protein L5"/>
    <property type="match status" value="1"/>
</dbReference>
<dbReference type="Gene3D" id="3.30.1440.10">
    <property type="match status" value="1"/>
</dbReference>
<dbReference type="HAMAP" id="MF_01333_B">
    <property type="entry name" value="Ribosomal_uL5_B"/>
    <property type="match status" value="1"/>
</dbReference>
<dbReference type="InterPro" id="IPR002132">
    <property type="entry name" value="Ribosomal_uL5"/>
</dbReference>
<dbReference type="InterPro" id="IPR020930">
    <property type="entry name" value="Ribosomal_uL5_bac-type"/>
</dbReference>
<dbReference type="InterPro" id="IPR031309">
    <property type="entry name" value="Ribosomal_uL5_C"/>
</dbReference>
<dbReference type="InterPro" id="IPR020929">
    <property type="entry name" value="Ribosomal_uL5_CS"/>
</dbReference>
<dbReference type="InterPro" id="IPR022803">
    <property type="entry name" value="Ribosomal_uL5_dom_sf"/>
</dbReference>
<dbReference type="InterPro" id="IPR031310">
    <property type="entry name" value="Ribosomal_uL5_N"/>
</dbReference>
<dbReference type="NCBIfam" id="NF000585">
    <property type="entry name" value="PRK00010.1"/>
    <property type="match status" value="1"/>
</dbReference>
<dbReference type="PANTHER" id="PTHR11994">
    <property type="entry name" value="60S RIBOSOMAL PROTEIN L11-RELATED"/>
    <property type="match status" value="1"/>
</dbReference>
<dbReference type="Pfam" id="PF00281">
    <property type="entry name" value="Ribosomal_L5"/>
    <property type="match status" value="1"/>
</dbReference>
<dbReference type="Pfam" id="PF00673">
    <property type="entry name" value="Ribosomal_L5_C"/>
    <property type="match status" value="1"/>
</dbReference>
<dbReference type="PIRSF" id="PIRSF002161">
    <property type="entry name" value="Ribosomal_L5"/>
    <property type="match status" value="1"/>
</dbReference>
<dbReference type="SUPFAM" id="SSF55282">
    <property type="entry name" value="RL5-like"/>
    <property type="match status" value="1"/>
</dbReference>
<dbReference type="PROSITE" id="PS00358">
    <property type="entry name" value="RIBOSOMAL_L5"/>
    <property type="match status" value="1"/>
</dbReference>
<keyword id="KW-0687">Ribonucleoprotein</keyword>
<keyword id="KW-0689">Ribosomal protein</keyword>
<keyword id="KW-0694">RNA-binding</keyword>
<keyword id="KW-0699">rRNA-binding</keyword>
<keyword id="KW-0820">tRNA-binding</keyword>
<protein>
    <recommendedName>
        <fullName evidence="1">Large ribosomal subunit protein uL5</fullName>
    </recommendedName>
    <alternativeName>
        <fullName evidence="2">50S ribosomal protein L5</fullName>
    </alternativeName>
</protein>
<evidence type="ECO:0000255" key="1">
    <source>
        <dbReference type="HAMAP-Rule" id="MF_01333"/>
    </source>
</evidence>
<evidence type="ECO:0000305" key="2"/>
<accession>Q0BNR5</accession>
<gene>
    <name evidence="1" type="primary">rplE</name>
    <name type="ordered locus">FTH_0243</name>
</gene>
<name>RL5_FRATO</name>
<reference key="1">
    <citation type="journal article" date="2006" name="J. Bacteriol.">
        <title>Chromosome rearrangement and diversification of Francisella tularensis revealed by the type B (OSU18) genome sequence.</title>
        <authorList>
            <person name="Petrosino J.F."/>
            <person name="Xiang Q."/>
            <person name="Karpathy S.E."/>
            <person name="Jiang H."/>
            <person name="Yerrapragada S."/>
            <person name="Liu Y."/>
            <person name="Gioia J."/>
            <person name="Hemphill L."/>
            <person name="Gonzalez A."/>
            <person name="Raghavan T.M."/>
            <person name="Uzman A."/>
            <person name="Fox G.E."/>
            <person name="Highlander S."/>
            <person name="Reichard M."/>
            <person name="Morton R.J."/>
            <person name="Clinkenbeard K.D."/>
            <person name="Weinstock G.M."/>
        </authorList>
    </citation>
    <scope>NUCLEOTIDE SEQUENCE [LARGE SCALE GENOMIC DNA]</scope>
    <source>
        <strain>OSU18</strain>
    </source>
</reference>
<organism>
    <name type="scientific">Francisella tularensis subsp. holarctica (strain OSU18)</name>
    <dbReference type="NCBI Taxonomy" id="393011"/>
    <lineage>
        <taxon>Bacteria</taxon>
        <taxon>Pseudomonadati</taxon>
        <taxon>Pseudomonadota</taxon>
        <taxon>Gammaproteobacteria</taxon>
        <taxon>Thiotrichales</taxon>
        <taxon>Francisellaceae</taxon>
        <taxon>Francisella</taxon>
    </lineage>
</organism>
<sequence>MARLKDYYQKELVAKLKTELGLDNIMEVPAIKKITLNMGVGDAAKDKKIMTFALNDLTAIAGQKPVVTKSKKSIAGFKIRDGWPIGAKVTLRGDRMYEFLDRLITIAIPRIRDFRGLSAKSFDGRGNYSLGMREQISFPEIDYDKVDSIRGLDISITTTAKNDDQGRALLKAFGFPFKS</sequence>
<proteinExistence type="inferred from homology"/>